<proteinExistence type="inferred from homology"/>
<accession>O27717</accession>
<feature type="chain" id="PRO_0000154797" description="Large ribosomal subunit protein uL10">
    <location>
        <begin position="1"/>
        <end position="336"/>
    </location>
</feature>
<feature type="region of interest" description="Disordered" evidence="2">
    <location>
        <begin position="292"/>
        <end position="336"/>
    </location>
</feature>
<feature type="compositionally biased region" description="Acidic residues" evidence="2">
    <location>
        <begin position="307"/>
        <end position="327"/>
    </location>
</feature>
<name>RL10_METTH</name>
<evidence type="ECO:0000255" key="1">
    <source>
        <dbReference type="HAMAP-Rule" id="MF_00280"/>
    </source>
</evidence>
<evidence type="ECO:0000256" key="2">
    <source>
        <dbReference type="SAM" id="MobiDB-lite"/>
    </source>
</evidence>
<evidence type="ECO:0000305" key="3"/>
<reference key="1">
    <citation type="journal article" date="1997" name="J. Bacteriol.">
        <title>Complete genome sequence of Methanobacterium thermoautotrophicum deltaH: functional analysis and comparative genomics.</title>
        <authorList>
            <person name="Smith D.R."/>
            <person name="Doucette-Stamm L.A."/>
            <person name="Deloughery C."/>
            <person name="Lee H.-M."/>
            <person name="Dubois J."/>
            <person name="Aldredge T."/>
            <person name="Bashirzadeh R."/>
            <person name="Blakely D."/>
            <person name="Cook R."/>
            <person name="Gilbert K."/>
            <person name="Harrison D."/>
            <person name="Hoang L."/>
            <person name="Keagle P."/>
            <person name="Lumm W."/>
            <person name="Pothier B."/>
            <person name="Qiu D."/>
            <person name="Spadafora R."/>
            <person name="Vicare R."/>
            <person name="Wang Y."/>
            <person name="Wierzbowski J."/>
            <person name="Gibson R."/>
            <person name="Jiwani N."/>
            <person name="Caruso A."/>
            <person name="Bush D."/>
            <person name="Safer H."/>
            <person name="Patwell D."/>
            <person name="Prabhakar S."/>
            <person name="McDougall S."/>
            <person name="Shimer G."/>
            <person name="Goyal A."/>
            <person name="Pietrovski S."/>
            <person name="Church G.M."/>
            <person name="Daniels C.J."/>
            <person name="Mao J.-I."/>
            <person name="Rice P."/>
            <person name="Noelling J."/>
            <person name="Reeve J.N."/>
        </authorList>
    </citation>
    <scope>NUCLEOTIDE SEQUENCE [LARGE SCALE GENOMIC DNA]</scope>
    <source>
        <strain>ATCC 29096 / DSM 1053 / JCM 10044 / NBRC 100330 / Delta H</strain>
    </source>
</reference>
<keyword id="KW-1185">Reference proteome</keyword>
<keyword id="KW-0687">Ribonucleoprotein</keyword>
<keyword id="KW-0689">Ribosomal protein</keyword>
<keyword id="KW-0694">RNA-binding</keyword>
<keyword id="KW-0699">rRNA-binding</keyword>
<gene>
    <name evidence="1" type="primary">rpl10</name>
    <name evidence="1" type="synonym">rplP0</name>
    <name type="ordered locus">MTH_1681</name>
</gene>
<sequence>MAHVAEWKKKEVQELHDLIKGYEVVGIANLADIPARQLQKMRQTLRDSALIRMSKKTLISLALEKAGRELENVDSLSDYMEGQPALIFTDMNPFKLFKILEDSKTPAPAKPGAIAPDDIVVPKGDTGFAPGPILGELQQIGIPAKIEKGKIVVSNDHVVVKAGEEIPPKVAGILTRLDIQPLEVGIDLRAAYENQTVYTADVLTIDEEKTLSDIQKAFSQAFNLSVNAVIYTRETMPAIIQKAASKSFNLAYNASILTSETTDLLLAKAYAQMLALAAAAAEINDEAVDDELKEKLSSRAAAPAPEEKEEEVEEEAEEEEEEEEEDAAAGLGALFG</sequence>
<protein>
    <recommendedName>
        <fullName evidence="1">Large ribosomal subunit protein uL10</fullName>
    </recommendedName>
    <alternativeName>
        <fullName evidence="3">50S ribosomal protein L10</fullName>
    </alternativeName>
    <alternativeName>
        <fullName evidence="1">Acidic ribosomal protein P0 homolog</fullName>
    </alternativeName>
</protein>
<comment type="function">
    <text evidence="1">Forms part of the ribosomal stalk, playing a central role in the interaction of the ribosome with GTP-bound translation factors.</text>
</comment>
<comment type="subunit">
    <text evidence="1">Part of the 50S ribosomal subunit. Forms part of the ribosomal stalk which helps the ribosome interact with GTP-bound translation factors. Forms a heptameric L10(L12)2(L12)2(L12)2 complex, where L10 forms an elongated spine to which the L12 dimers bind in a sequential fashion.</text>
</comment>
<comment type="similarity">
    <text evidence="1">Belongs to the universal ribosomal protein uL10 family.</text>
</comment>
<organism>
    <name type="scientific">Methanothermobacter thermautotrophicus (strain ATCC 29096 / DSM 1053 / JCM 10044 / NBRC 100330 / Delta H)</name>
    <name type="common">Methanobacterium thermoautotrophicum</name>
    <dbReference type="NCBI Taxonomy" id="187420"/>
    <lineage>
        <taxon>Archaea</taxon>
        <taxon>Methanobacteriati</taxon>
        <taxon>Methanobacteriota</taxon>
        <taxon>Methanomada group</taxon>
        <taxon>Methanobacteria</taxon>
        <taxon>Methanobacteriales</taxon>
        <taxon>Methanobacteriaceae</taxon>
        <taxon>Methanothermobacter</taxon>
    </lineage>
</organism>
<dbReference type="EMBL" id="AE000666">
    <property type="protein sequence ID" value="AAB86153.1"/>
    <property type="molecule type" value="Genomic_DNA"/>
</dbReference>
<dbReference type="PIR" id="G69091">
    <property type="entry name" value="G69091"/>
</dbReference>
<dbReference type="RefSeq" id="WP_010877288.1">
    <property type="nucleotide sequence ID" value="NC_000916.1"/>
</dbReference>
<dbReference type="SMR" id="O27717"/>
<dbReference type="FunCoup" id="O27717">
    <property type="interactions" value="158"/>
</dbReference>
<dbReference type="STRING" id="187420.MTH_1681"/>
<dbReference type="PaxDb" id="187420-MTH_1681"/>
<dbReference type="EnsemblBacteria" id="AAB86153">
    <property type="protein sequence ID" value="AAB86153"/>
    <property type="gene ID" value="MTH_1681"/>
</dbReference>
<dbReference type="KEGG" id="mth:MTH_1681"/>
<dbReference type="PATRIC" id="fig|187420.15.peg.1641"/>
<dbReference type="HOGENOM" id="CLU_053173_0_0_2"/>
<dbReference type="InParanoid" id="O27717"/>
<dbReference type="Proteomes" id="UP000005223">
    <property type="component" value="Chromosome"/>
</dbReference>
<dbReference type="GO" id="GO:0022625">
    <property type="term" value="C:cytosolic large ribosomal subunit"/>
    <property type="evidence" value="ECO:0007669"/>
    <property type="project" value="TreeGrafter"/>
</dbReference>
<dbReference type="GO" id="GO:0070180">
    <property type="term" value="F:large ribosomal subunit rRNA binding"/>
    <property type="evidence" value="ECO:0007669"/>
    <property type="project" value="UniProtKB-UniRule"/>
</dbReference>
<dbReference type="GO" id="GO:0003735">
    <property type="term" value="F:structural constituent of ribosome"/>
    <property type="evidence" value="ECO:0007669"/>
    <property type="project" value="TreeGrafter"/>
</dbReference>
<dbReference type="GO" id="GO:0002181">
    <property type="term" value="P:cytoplasmic translation"/>
    <property type="evidence" value="ECO:0007669"/>
    <property type="project" value="TreeGrafter"/>
</dbReference>
<dbReference type="GO" id="GO:0000027">
    <property type="term" value="P:ribosomal large subunit assembly"/>
    <property type="evidence" value="ECO:0007669"/>
    <property type="project" value="TreeGrafter"/>
</dbReference>
<dbReference type="CDD" id="cd05795">
    <property type="entry name" value="Ribosomal_P0_L10e"/>
    <property type="match status" value="1"/>
</dbReference>
<dbReference type="FunFam" id="3.90.105.20:FF:000001">
    <property type="entry name" value="60S acidic ribosomal protein P0"/>
    <property type="match status" value="1"/>
</dbReference>
<dbReference type="Gene3D" id="3.30.70.1730">
    <property type="match status" value="1"/>
</dbReference>
<dbReference type="Gene3D" id="3.90.105.20">
    <property type="match status" value="1"/>
</dbReference>
<dbReference type="Gene3D" id="6.10.140.760">
    <property type="match status" value="1"/>
</dbReference>
<dbReference type="HAMAP" id="MF_00280">
    <property type="entry name" value="Ribosomal_uL10_arch"/>
    <property type="match status" value="1"/>
</dbReference>
<dbReference type="InterPro" id="IPR050323">
    <property type="entry name" value="Ribosomal_protein_uL10"/>
</dbReference>
<dbReference type="InterPro" id="IPR001790">
    <property type="entry name" value="Ribosomal_uL10"/>
</dbReference>
<dbReference type="InterPro" id="IPR040637">
    <property type="entry name" value="Ribosomal_uL10-like_insert"/>
</dbReference>
<dbReference type="InterPro" id="IPR043164">
    <property type="entry name" value="Ribosomal_uL10-like_insert_sf"/>
</dbReference>
<dbReference type="InterPro" id="IPR043141">
    <property type="entry name" value="Ribosomal_uL10-like_sf"/>
</dbReference>
<dbReference type="InterPro" id="IPR022909">
    <property type="entry name" value="Ribosomal_uL10_arc"/>
</dbReference>
<dbReference type="NCBIfam" id="NF003098">
    <property type="entry name" value="PRK04019.1-5"/>
    <property type="match status" value="1"/>
</dbReference>
<dbReference type="PANTHER" id="PTHR45699">
    <property type="entry name" value="60S ACIDIC RIBOSOMAL PROTEIN P0"/>
    <property type="match status" value="1"/>
</dbReference>
<dbReference type="PANTHER" id="PTHR45699:SF3">
    <property type="entry name" value="LARGE RIBOSOMAL SUBUNIT PROTEIN UL10"/>
    <property type="match status" value="1"/>
</dbReference>
<dbReference type="Pfam" id="PF00466">
    <property type="entry name" value="Ribosomal_L10"/>
    <property type="match status" value="1"/>
</dbReference>
<dbReference type="Pfam" id="PF17777">
    <property type="entry name" value="RL10P_insert"/>
    <property type="match status" value="1"/>
</dbReference>
<dbReference type="SUPFAM" id="SSF160369">
    <property type="entry name" value="Ribosomal protein L10-like"/>
    <property type="match status" value="1"/>
</dbReference>